<organism>
    <name type="scientific">Pseudomonas fluorescens (strain Pf0-1)</name>
    <dbReference type="NCBI Taxonomy" id="205922"/>
    <lineage>
        <taxon>Bacteria</taxon>
        <taxon>Pseudomonadati</taxon>
        <taxon>Pseudomonadota</taxon>
        <taxon>Gammaproteobacteria</taxon>
        <taxon>Pseudomonadales</taxon>
        <taxon>Pseudomonadaceae</taxon>
        <taxon>Pseudomonas</taxon>
    </lineage>
</organism>
<evidence type="ECO:0000255" key="1">
    <source>
        <dbReference type="HAMAP-Rule" id="MF_00690"/>
    </source>
</evidence>
<accession>Q3K8R4</accession>
<feature type="chain" id="PRO_1000045170" description="UPF0270 protein Pfl01_4103">
    <location>
        <begin position="1"/>
        <end position="75"/>
    </location>
</feature>
<reference key="1">
    <citation type="journal article" date="2009" name="Genome Biol.">
        <title>Genomic and genetic analyses of diversity and plant interactions of Pseudomonas fluorescens.</title>
        <authorList>
            <person name="Silby M.W."/>
            <person name="Cerdeno-Tarraga A.M."/>
            <person name="Vernikos G.S."/>
            <person name="Giddens S.R."/>
            <person name="Jackson R.W."/>
            <person name="Preston G.M."/>
            <person name="Zhang X.-X."/>
            <person name="Moon C.D."/>
            <person name="Gehrig S.M."/>
            <person name="Godfrey S.A.C."/>
            <person name="Knight C.G."/>
            <person name="Malone J.G."/>
            <person name="Robinson Z."/>
            <person name="Spiers A.J."/>
            <person name="Harris S."/>
            <person name="Challis G.L."/>
            <person name="Yaxley A.M."/>
            <person name="Harris D."/>
            <person name="Seeger K."/>
            <person name="Murphy L."/>
            <person name="Rutter S."/>
            <person name="Squares R."/>
            <person name="Quail M.A."/>
            <person name="Saunders E."/>
            <person name="Mavromatis K."/>
            <person name="Brettin T.S."/>
            <person name="Bentley S.D."/>
            <person name="Hothersall J."/>
            <person name="Stephens E."/>
            <person name="Thomas C.M."/>
            <person name="Parkhill J."/>
            <person name="Levy S.B."/>
            <person name="Rainey P.B."/>
            <person name="Thomson N.R."/>
        </authorList>
    </citation>
    <scope>NUCLEOTIDE SEQUENCE [LARGE SCALE GENOMIC DNA]</scope>
    <source>
        <strain>Pf0-1</strain>
    </source>
</reference>
<comment type="similarity">
    <text evidence="1">Belongs to the UPF0270 family.</text>
</comment>
<proteinExistence type="inferred from homology"/>
<gene>
    <name type="ordered locus">Pfl01_4103</name>
</gene>
<protein>
    <recommendedName>
        <fullName evidence="1">UPF0270 protein Pfl01_4103</fullName>
    </recommendedName>
</protein>
<dbReference type="EMBL" id="CP000094">
    <property type="protein sequence ID" value="ABA75840.1"/>
    <property type="molecule type" value="Genomic_DNA"/>
</dbReference>
<dbReference type="RefSeq" id="WP_003192759.1">
    <property type="nucleotide sequence ID" value="NC_007492.2"/>
</dbReference>
<dbReference type="SMR" id="Q3K8R4"/>
<dbReference type="KEGG" id="pfo:Pfl01_4103"/>
<dbReference type="eggNOG" id="COG3089">
    <property type="taxonomic scope" value="Bacteria"/>
</dbReference>
<dbReference type="HOGENOM" id="CLU_186759_2_0_6"/>
<dbReference type="Proteomes" id="UP000002704">
    <property type="component" value="Chromosome"/>
</dbReference>
<dbReference type="Gene3D" id="1.10.10.610">
    <property type="entry name" value="YehU-like"/>
    <property type="match status" value="1"/>
</dbReference>
<dbReference type="HAMAP" id="MF_00690">
    <property type="entry name" value="UPF0270"/>
    <property type="match status" value="1"/>
</dbReference>
<dbReference type="InterPro" id="IPR010648">
    <property type="entry name" value="UPF0270"/>
</dbReference>
<dbReference type="InterPro" id="IPR036685">
    <property type="entry name" value="YehU-like_sf"/>
</dbReference>
<dbReference type="NCBIfam" id="NF001441">
    <property type="entry name" value="PRK00304.1"/>
    <property type="match status" value="1"/>
</dbReference>
<dbReference type="Pfam" id="PF06794">
    <property type="entry name" value="UPF0270"/>
    <property type="match status" value="1"/>
</dbReference>
<dbReference type="PIRSF" id="PIRSF006169">
    <property type="entry name" value="UCP006169"/>
    <property type="match status" value="1"/>
</dbReference>
<dbReference type="SUPFAM" id="SSF118001">
    <property type="entry name" value="YehU-like"/>
    <property type="match status" value="1"/>
</dbReference>
<name>Y4103_PSEPF</name>
<sequence length="75" mass="8598">MLIPYDALEVDTLTRLIEDFVTRDGTDNGDDTPLETRVLRVRQALTKGQALIVFDPESEQCQLMLKHDVPKHLFD</sequence>